<feature type="chain" id="PRO_1000193721" description="Rhamnulose-1-phosphate aldolase">
    <location>
        <begin position="1"/>
        <end position="274"/>
    </location>
</feature>
<feature type="active site" evidence="1">
    <location>
        <position position="117"/>
    </location>
</feature>
<feature type="binding site" evidence="1">
    <location>
        <position position="141"/>
    </location>
    <ligand>
        <name>Zn(2+)</name>
        <dbReference type="ChEBI" id="CHEBI:29105"/>
    </ligand>
</feature>
<feature type="binding site" evidence="1">
    <location>
        <position position="143"/>
    </location>
    <ligand>
        <name>Zn(2+)</name>
        <dbReference type="ChEBI" id="CHEBI:29105"/>
    </ligand>
</feature>
<feature type="binding site" evidence="1">
    <location>
        <position position="212"/>
    </location>
    <ligand>
        <name>Zn(2+)</name>
        <dbReference type="ChEBI" id="CHEBI:29105"/>
    </ligand>
</feature>
<gene>
    <name evidence="1" type="primary">rhaD</name>
    <name type="ordered locus">ECDH10B_4092</name>
</gene>
<reference key="1">
    <citation type="journal article" date="2008" name="J. Bacteriol.">
        <title>The complete genome sequence of Escherichia coli DH10B: insights into the biology of a laboratory workhorse.</title>
        <authorList>
            <person name="Durfee T."/>
            <person name="Nelson R."/>
            <person name="Baldwin S."/>
            <person name="Plunkett G. III"/>
            <person name="Burland V."/>
            <person name="Mau B."/>
            <person name="Petrosino J.F."/>
            <person name="Qin X."/>
            <person name="Muzny D.M."/>
            <person name="Ayele M."/>
            <person name="Gibbs R.A."/>
            <person name="Csorgo B."/>
            <person name="Posfai G."/>
            <person name="Weinstock G.M."/>
            <person name="Blattner F.R."/>
        </authorList>
    </citation>
    <scope>NUCLEOTIDE SEQUENCE [LARGE SCALE GENOMIC DNA]</scope>
    <source>
        <strain>K12 / DH10B</strain>
    </source>
</reference>
<dbReference type="EC" id="4.1.2.19" evidence="1"/>
<dbReference type="EMBL" id="CP000948">
    <property type="protein sequence ID" value="ACB04915.1"/>
    <property type="molecule type" value="Genomic_DNA"/>
</dbReference>
<dbReference type="RefSeq" id="WP_001179745.1">
    <property type="nucleotide sequence ID" value="NC_010473.1"/>
</dbReference>
<dbReference type="SMR" id="B1XB69"/>
<dbReference type="KEGG" id="ecd:ECDH10B_4092"/>
<dbReference type="HOGENOM" id="CLU_076831_0_0_6"/>
<dbReference type="UniPathway" id="UPA00541">
    <property type="reaction ID" value="UER00603"/>
</dbReference>
<dbReference type="GO" id="GO:0005829">
    <property type="term" value="C:cytosol"/>
    <property type="evidence" value="ECO:0007669"/>
    <property type="project" value="TreeGrafter"/>
</dbReference>
<dbReference type="GO" id="GO:0046872">
    <property type="term" value="F:metal ion binding"/>
    <property type="evidence" value="ECO:0007669"/>
    <property type="project" value="UniProtKB-KW"/>
</dbReference>
<dbReference type="GO" id="GO:0008994">
    <property type="term" value="F:rhamnulose-1-phosphate aldolase activity"/>
    <property type="evidence" value="ECO:0007669"/>
    <property type="project" value="UniProtKB-UniRule"/>
</dbReference>
<dbReference type="GO" id="GO:0019323">
    <property type="term" value="P:pentose catabolic process"/>
    <property type="evidence" value="ECO:0007669"/>
    <property type="project" value="TreeGrafter"/>
</dbReference>
<dbReference type="GO" id="GO:0019301">
    <property type="term" value="P:rhamnose catabolic process"/>
    <property type="evidence" value="ECO:0007669"/>
    <property type="project" value="UniProtKB-UniRule"/>
</dbReference>
<dbReference type="CDD" id="cd00398">
    <property type="entry name" value="Aldolase_II"/>
    <property type="match status" value="1"/>
</dbReference>
<dbReference type="FunFam" id="3.40.225.10:FF:000006">
    <property type="entry name" value="Rhamnulose-1-phosphate aldolase"/>
    <property type="match status" value="1"/>
</dbReference>
<dbReference type="Gene3D" id="3.40.225.10">
    <property type="entry name" value="Class II aldolase/adducin N-terminal domain"/>
    <property type="match status" value="1"/>
</dbReference>
<dbReference type="HAMAP" id="MF_00770">
    <property type="entry name" value="RhaD"/>
    <property type="match status" value="1"/>
</dbReference>
<dbReference type="InterPro" id="IPR050197">
    <property type="entry name" value="Aldolase_class_II_sugar_metab"/>
</dbReference>
<dbReference type="InterPro" id="IPR001303">
    <property type="entry name" value="Aldolase_II/adducin_N"/>
</dbReference>
<dbReference type="InterPro" id="IPR036409">
    <property type="entry name" value="Aldolase_II/adducin_N_sf"/>
</dbReference>
<dbReference type="InterPro" id="IPR013447">
    <property type="entry name" value="Rhamnulose-1-P_Aldolase"/>
</dbReference>
<dbReference type="NCBIfam" id="NF002963">
    <property type="entry name" value="PRK03634.1"/>
    <property type="match status" value="1"/>
</dbReference>
<dbReference type="NCBIfam" id="TIGR02624">
    <property type="entry name" value="rhamnu_1P_ald"/>
    <property type="match status" value="1"/>
</dbReference>
<dbReference type="PANTHER" id="PTHR22789">
    <property type="entry name" value="FUCULOSE PHOSPHATE ALDOLASE"/>
    <property type="match status" value="1"/>
</dbReference>
<dbReference type="PANTHER" id="PTHR22789:SF16">
    <property type="entry name" value="RHAMNULOSE-1-PHOSPHATE ALDOLASE"/>
    <property type="match status" value="1"/>
</dbReference>
<dbReference type="Pfam" id="PF00596">
    <property type="entry name" value="Aldolase_II"/>
    <property type="match status" value="1"/>
</dbReference>
<dbReference type="SMART" id="SM01007">
    <property type="entry name" value="Aldolase_II"/>
    <property type="match status" value="1"/>
</dbReference>
<dbReference type="SUPFAM" id="SSF53639">
    <property type="entry name" value="AraD/HMP-PK domain-like"/>
    <property type="match status" value="1"/>
</dbReference>
<sequence length="274" mass="30145">MQNITQSWFVQGMIKATTDAWLKGWDERNGGNLTLRLDDADIAPYHDNFHQQPRYIPLSQPMPLLANTPFIVTGSGKFFRNVQLDPAANLGIVKVDSDGAGYHILWGLTNEAVPTSELPAHFLSHCERIKATNGKDRVIMHCHATNLIALTYVLENDTAVFTRQLWEGSTECLVVFPDGVGILPWMVPGTDEIGQATAQEMQKHSLVLWPFHGVFGSGPTLDETFGLIDTAEKSAQVLVKVYSMGGMKQTISREELIALGKRFGVTPLASALAL</sequence>
<evidence type="ECO:0000255" key="1">
    <source>
        <dbReference type="HAMAP-Rule" id="MF_00770"/>
    </source>
</evidence>
<protein>
    <recommendedName>
        <fullName evidence="1">Rhamnulose-1-phosphate aldolase</fullName>
        <ecNumber evidence="1">4.1.2.19</ecNumber>
    </recommendedName>
</protein>
<keyword id="KW-0963">Cytoplasm</keyword>
<keyword id="KW-0456">Lyase</keyword>
<keyword id="KW-0479">Metal-binding</keyword>
<keyword id="KW-0684">Rhamnose metabolism</keyword>
<keyword id="KW-0862">Zinc</keyword>
<organism>
    <name type="scientific">Escherichia coli (strain K12 / DH10B)</name>
    <dbReference type="NCBI Taxonomy" id="316385"/>
    <lineage>
        <taxon>Bacteria</taxon>
        <taxon>Pseudomonadati</taxon>
        <taxon>Pseudomonadota</taxon>
        <taxon>Gammaproteobacteria</taxon>
        <taxon>Enterobacterales</taxon>
        <taxon>Enterobacteriaceae</taxon>
        <taxon>Escherichia</taxon>
    </lineage>
</organism>
<proteinExistence type="inferred from homology"/>
<comment type="function">
    <text evidence="1">Catalyzes the reversible cleavage of L-rhamnulose-1-phosphate to dihydroxyacetone phosphate (DHAP) and L-lactaldehyde.</text>
</comment>
<comment type="catalytic activity">
    <reaction evidence="1">
        <text>L-rhamnulose 1-phosphate = (S)-lactaldehyde + dihydroxyacetone phosphate</text>
        <dbReference type="Rhea" id="RHEA:19689"/>
        <dbReference type="ChEBI" id="CHEBI:18041"/>
        <dbReference type="ChEBI" id="CHEBI:57642"/>
        <dbReference type="ChEBI" id="CHEBI:58313"/>
        <dbReference type="EC" id="4.1.2.19"/>
    </reaction>
</comment>
<comment type="cofactor">
    <cofactor evidence="1">
        <name>Zn(2+)</name>
        <dbReference type="ChEBI" id="CHEBI:29105"/>
    </cofactor>
    <text evidence="1">Binds 1 zinc ion per subunit.</text>
</comment>
<comment type="pathway">
    <text evidence="1">Carbohydrate degradation; L-rhamnose degradation; glycerone phosphate from L-rhamnose: step 3/3.</text>
</comment>
<comment type="subunit">
    <text evidence="1">Homotetramer.</text>
</comment>
<comment type="subcellular location">
    <subcellularLocation>
        <location evidence="1">Cytoplasm</location>
    </subcellularLocation>
</comment>
<comment type="similarity">
    <text evidence="1">Belongs to the aldolase class II family. RhaD subfamily.</text>
</comment>
<accession>B1XB69</accession>
<name>RHAD_ECODH</name>